<reference key="1">
    <citation type="journal article" date="2011" name="J. Bacteriol.">
        <title>Complete genome sequence of Burkholderia rhizoxinica, an endosymbiont of Rhizopus microsporus.</title>
        <authorList>
            <person name="Lackner G."/>
            <person name="Moebius N."/>
            <person name="Partida-Martinez L."/>
            <person name="Hertweck C."/>
        </authorList>
    </citation>
    <scope>NUCLEOTIDE SEQUENCE [LARGE SCALE GENOMIC DNA]</scope>
    <source>
        <strain>DSM 19002 / CIP 109453 / HKI 454</strain>
    </source>
</reference>
<reference key="2">
    <citation type="journal article" date="2019" name="ACS Chem. Biol.">
        <title>Metabolic pathway rerouting in Paraburkholderia rhizoxinica evolved long-overlooked derivatives of coenzyme F420.</title>
        <authorList>
            <person name="Braga D."/>
            <person name="Last D."/>
            <person name="Hasan M."/>
            <person name="Guo H."/>
            <person name="Leichnitz D."/>
            <person name="Uzum Z."/>
            <person name="Richter I."/>
            <person name="Schalk F."/>
            <person name="Beemelmanns C."/>
            <person name="Hertweck C."/>
            <person name="Lackner G."/>
        </authorList>
    </citation>
    <scope>FUNCTION</scope>
    <scope>CATALYTIC ACTIVITY</scope>
    <scope>PATHWAY</scope>
</reference>
<proteinExistence type="evidence at protein level"/>
<organism>
    <name type="scientific">Mycetohabitans rhizoxinica (strain DSM 19002 / CIP 109453 / HKI 454)</name>
    <name type="common">Paraburkholderia rhizoxinica</name>
    <dbReference type="NCBI Taxonomy" id="882378"/>
    <lineage>
        <taxon>Bacteria</taxon>
        <taxon>Pseudomonadati</taxon>
        <taxon>Pseudomonadota</taxon>
        <taxon>Betaproteobacteria</taxon>
        <taxon>Burkholderiales</taxon>
        <taxon>Burkholderiaceae</taxon>
        <taxon>Mycetohabitans</taxon>
    </lineage>
</organism>
<feature type="chain" id="PRO_0000452327" description="3-phospho-D-glycerate guanylyltransferase">
    <location>
        <begin position="1"/>
        <end position="221"/>
    </location>
</feature>
<comment type="function">
    <text evidence="2">Guanylyltransferase that catalyzes the activation of (2R)-3-phosphoglycerate (3PG) as 3-[(R)-glyceryl]-diphospho-5'-guanosine, via the condensation of 3PG with GTP. It is involved in the biosynthesis of a derivative of the hydride carrier cofactor coenzyme F420, 3PG-F420. Can also use (2S)-2-phospholactate (2-PL), with lower turnover, and has weak activity with phosphoenolpyruvate (PEP).</text>
</comment>
<comment type="catalytic activity">
    <reaction evidence="1 2">
        <text>(2R)-3-phosphoglycerate + GTP + H(+) = 3-[(R)-glyceryl]-diphospho-5'-guanosine + diphosphate</text>
        <dbReference type="Rhea" id="RHEA:63440"/>
        <dbReference type="ChEBI" id="CHEBI:15378"/>
        <dbReference type="ChEBI" id="CHEBI:33019"/>
        <dbReference type="ChEBI" id="CHEBI:37565"/>
        <dbReference type="ChEBI" id="CHEBI:58272"/>
        <dbReference type="ChEBI" id="CHEBI:147306"/>
        <dbReference type="EC" id="2.7.7.106"/>
    </reaction>
    <physiologicalReaction direction="left-to-right" evidence="2">
        <dbReference type="Rhea" id="RHEA:63441"/>
    </physiologicalReaction>
</comment>
<comment type="catalytic activity">
    <reaction evidence="2">
        <text>(2S)-2-phospholactate + GTP + H(+) = (2S)-lactyl-2-diphospho-5'-guanosine + diphosphate</text>
        <dbReference type="Rhea" id="RHEA:63424"/>
        <dbReference type="ChEBI" id="CHEBI:15378"/>
        <dbReference type="ChEBI" id="CHEBI:33019"/>
        <dbReference type="ChEBI" id="CHEBI:37565"/>
        <dbReference type="ChEBI" id="CHEBI:59435"/>
        <dbReference type="ChEBI" id="CHEBI:59906"/>
    </reaction>
    <physiologicalReaction direction="left-to-right" evidence="2">
        <dbReference type="Rhea" id="RHEA:63425"/>
    </physiologicalReaction>
</comment>
<comment type="pathway">
    <text evidence="1 2">Cofactor biosynthesis; coenzyme F420 biosynthesis.</text>
</comment>
<comment type="similarity">
    <text evidence="1">Belongs to the CofC family.</text>
</comment>
<sequence length="221" mass="23341">MRCNGMSPVSVAQRNTGIWAVVPLKAPECAKTRLSGVLSHAARQALFFSMASHVIGTLRASPRIASLLVVTPSESTAEMARAAGAEILWGPPDEGMANACSRAMAHIAAAGGERVMFVPGDLPLLDGAAIDMLSRAPVDAIGMAPNRDGHGTNGLICRPGAIPLFFSGPSFSAHQNAARCAGIDVWIVRSREWALDVDLPADLEEFESSIKDAKRRVLCQI</sequence>
<evidence type="ECO:0000255" key="1">
    <source>
        <dbReference type="HAMAP-Rule" id="MF_02114"/>
    </source>
</evidence>
<evidence type="ECO:0000269" key="2">
    <source>
    </source>
</evidence>
<evidence type="ECO:0000303" key="3">
    <source>
    </source>
</evidence>
<evidence type="ECO:0000305" key="4"/>
<evidence type="ECO:0000312" key="5">
    <source>
        <dbReference type="EMBL" id="CBW75654.1"/>
    </source>
</evidence>
<keyword id="KW-0002">3D-structure</keyword>
<keyword id="KW-0342">GTP-binding</keyword>
<keyword id="KW-0547">Nucleotide-binding</keyword>
<keyword id="KW-0548">Nucleotidyltransferase</keyword>
<keyword id="KW-0808">Transferase</keyword>
<accession>E5ASS2</accession>
<protein>
    <recommendedName>
        <fullName evidence="1 4">3-phospho-D-glycerate guanylyltransferase</fullName>
        <shortName evidence="1">3PG guanylyltransferase</shortName>
        <ecNumber evidence="1 2">2.7.7.106</ecNumber>
    </recommendedName>
</protein>
<name>FBID_MYCRK</name>
<gene>
    <name evidence="3" type="primary">cofC</name>
    <name evidence="5" type="ordered locus">RBRH_02550</name>
</gene>
<dbReference type="EC" id="2.7.7.106" evidence="1 2"/>
<dbReference type="EMBL" id="FR687359">
    <property type="protein sequence ID" value="CBW75654.1"/>
    <property type="molecule type" value="Genomic_DNA"/>
</dbReference>
<dbReference type="PDB" id="7P97">
    <property type="method" value="X-ray"/>
    <property type="resolution" value="2.35 A"/>
    <property type="chains" value="AAA/BBB=6-220"/>
</dbReference>
<dbReference type="PDBsum" id="7P97"/>
<dbReference type="SMR" id="E5ASS2"/>
<dbReference type="STRING" id="882378.RBRH_02550"/>
<dbReference type="KEGG" id="brh:RBRH_02550"/>
<dbReference type="eggNOG" id="COG1920">
    <property type="taxonomic scope" value="Bacteria"/>
</dbReference>
<dbReference type="HOGENOM" id="CLU_076569_1_0_4"/>
<dbReference type="OrthoDB" id="9128174at2"/>
<dbReference type="BioCyc" id="MetaCyc:MONOMER-21053"/>
<dbReference type="UniPathway" id="UPA00071"/>
<dbReference type="Proteomes" id="UP000007437">
    <property type="component" value="Chromosome"/>
</dbReference>
<dbReference type="GO" id="GO:0005525">
    <property type="term" value="F:GTP binding"/>
    <property type="evidence" value="ECO:0007669"/>
    <property type="project" value="UniProtKB-KW"/>
</dbReference>
<dbReference type="GO" id="GO:0043814">
    <property type="term" value="F:phospholactate guanylyltransferase activity"/>
    <property type="evidence" value="ECO:0007669"/>
    <property type="project" value="InterPro"/>
</dbReference>
<dbReference type="GO" id="GO:0052645">
    <property type="term" value="P:F420-0 metabolic process"/>
    <property type="evidence" value="ECO:0007669"/>
    <property type="project" value="UniProtKB-UniRule"/>
</dbReference>
<dbReference type="Gene3D" id="3.90.550.10">
    <property type="entry name" value="Spore Coat Polysaccharide Biosynthesis Protein SpsA, Chain A"/>
    <property type="match status" value="1"/>
</dbReference>
<dbReference type="HAMAP" id="MF_02114">
    <property type="entry name" value="CofC"/>
    <property type="match status" value="1"/>
</dbReference>
<dbReference type="InterPro" id="IPR002835">
    <property type="entry name" value="CofC"/>
</dbReference>
<dbReference type="InterPro" id="IPR029044">
    <property type="entry name" value="Nucleotide-diphossugar_trans"/>
</dbReference>
<dbReference type="NCBIfam" id="TIGR03552">
    <property type="entry name" value="F420_cofC"/>
    <property type="match status" value="1"/>
</dbReference>
<dbReference type="PANTHER" id="PTHR40392">
    <property type="entry name" value="2-PHOSPHO-L-LACTATE GUANYLYLTRANSFERASE"/>
    <property type="match status" value="1"/>
</dbReference>
<dbReference type="PANTHER" id="PTHR40392:SF1">
    <property type="entry name" value="2-PHOSPHO-L-LACTATE GUANYLYLTRANSFERASE"/>
    <property type="match status" value="1"/>
</dbReference>
<dbReference type="Pfam" id="PF01983">
    <property type="entry name" value="CofC"/>
    <property type="match status" value="1"/>
</dbReference>
<dbReference type="SUPFAM" id="SSF53448">
    <property type="entry name" value="Nucleotide-diphospho-sugar transferases"/>
    <property type="match status" value="1"/>
</dbReference>